<gene>
    <name evidence="1" type="primary">flhD</name>
    <name type="ordered locus">ECUMN_2189</name>
</gene>
<sequence length="119" mass="13618">MGIMHTSELLKHIYDINLSYLLLAQRLIVQDKASAMFRLGINEEMATTLAALTLPQMVKLAETNQLVCHFRFDSHQTITQLTQDSRVDDLQQIHTGIMLSTRLLNDVNQPEEALRKKRA</sequence>
<dbReference type="EMBL" id="CU928163">
    <property type="protein sequence ID" value="CAR13382.1"/>
    <property type="molecule type" value="Genomic_DNA"/>
</dbReference>
<dbReference type="RefSeq" id="YP_002412911.2">
    <property type="nucleotide sequence ID" value="NC_011751.1"/>
</dbReference>
<dbReference type="SMR" id="B7NBP2"/>
<dbReference type="STRING" id="585056.ECUMN_2189"/>
<dbReference type="KEGG" id="eum:ECUMN_2189"/>
<dbReference type="PATRIC" id="fig|585056.7.peg.2375"/>
<dbReference type="HOGENOM" id="CLU_144160_0_0_6"/>
<dbReference type="Proteomes" id="UP000007097">
    <property type="component" value="Chromosome"/>
</dbReference>
<dbReference type="GO" id="GO:0005737">
    <property type="term" value="C:cytoplasm"/>
    <property type="evidence" value="ECO:0007669"/>
    <property type="project" value="UniProtKB-SubCell"/>
</dbReference>
<dbReference type="GO" id="GO:0003677">
    <property type="term" value="F:DNA binding"/>
    <property type="evidence" value="ECO:0007669"/>
    <property type="project" value="UniProtKB-UniRule"/>
</dbReference>
<dbReference type="GO" id="GO:0044780">
    <property type="term" value="P:bacterial-type flagellum assembly"/>
    <property type="evidence" value="ECO:0007669"/>
    <property type="project" value="InterPro"/>
</dbReference>
<dbReference type="GO" id="GO:0045893">
    <property type="term" value="P:positive regulation of DNA-templated transcription"/>
    <property type="evidence" value="ECO:0007669"/>
    <property type="project" value="InterPro"/>
</dbReference>
<dbReference type="GO" id="GO:1902208">
    <property type="term" value="P:regulation of bacterial-type flagellum assembly"/>
    <property type="evidence" value="ECO:0007669"/>
    <property type="project" value="UniProtKB-UniRule"/>
</dbReference>
<dbReference type="FunFam" id="1.10.4000.10:FF:000001">
    <property type="entry name" value="Flagellar transcriptional regulator FlhD"/>
    <property type="match status" value="1"/>
</dbReference>
<dbReference type="Gene3D" id="1.10.4000.10">
    <property type="entry name" value="Flagellar transcriptional activator FlhD"/>
    <property type="match status" value="1"/>
</dbReference>
<dbReference type="HAMAP" id="MF_00725">
    <property type="entry name" value="FlhD"/>
    <property type="match status" value="1"/>
</dbReference>
<dbReference type="InterPro" id="IPR023559">
    <property type="entry name" value="Flagellar_FlhD"/>
</dbReference>
<dbReference type="InterPro" id="IPR036194">
    <property type="entry name" value="FlhD_sf"/>
</dbReference>
<dbReference type="NCBIfam" id="NF002783">
    <property type="entry name" value="PRK02909.1-1"/>
    <property type="match status" value="1"/>
</dbReference>
<dbReference type="Pfam" id="PF05247">
    <property type="entry name" value="FlhD"/>
    <property type="match status" value="1"/>
</dbReference>
<dbReference type="SUPFAM" id="SSF63592">
    <property type="entry name" value="Flagellar transcriptional activator FlhD"/>
    <property type="match status" value="1"/>
</dbReference>
<keyword id="KW-0010">Activator</keyword>
<keyword id="KW-1005">Bacterial flagellum biogenesis</keyword>
<keyword id="KW-0963">Cytoplasm</keyword>
<keyword id="KW-1015">Disulfide bond</keyword>
<keyword id="KW-0238">DNA-binding</keyword>
<keyword id="KW-0804">Transcription</keyword>
<keyword id="KW-0805">Transcription regulation</keyword>
<evidence type="ECO:0000255" key="1">
    <source>
        <dbReference type="HAMAP-Rule" id="MF_00725"/>
    </source>
</evidence>
<proteinExistence type="inferred from homology"/>
<feature type="chain" id="PRO_1000132684" description="Flagellar transcriptional regulator FlhD">
    <location>
        <begin position="1"/>
        <end position="119"/>
    </location>
</feature>
<feature type="disulfide bond" description="Interchain" evidence="1">
    <location>
        <position position="68"/>
    </location>
</feature>
<name>FLHD_ECOLU</name>
<protein>
    <recommendedName>
        <fullName evidence="1">Flagellar transcriptional regulator FlhD</fullName>
    </recommendedName>
</protein>
<reference key="1">
    <citation type="journal article" date="2009" name="PLoS Genet.">
        <title>Organised genome dynamics in the Escherichia coli species results in highly diverse adaptive paths.</title>
        <authorList>
            <person name="Touchon M."/>
            <person name="Hoede C."/>
            <person name="Tenaillon O."/>
            <person name="Barbe V."/>
            <person name="Baeriswyl S."/>
            <person name="Bidet P."/>
            <person name="Bingen E."/>
            <person name="Bonacorsi S."/>
            <person name="Bouchier C."/>
            <person name="Bouvet O."/>
            <person name="Calteau A."/>
            <person name="Chiapello H."/>
            <person name="Clermont O."/>
            <person name="Cruveiller S."/>
            <person name="Danchin A."/>
            <person name="Diard M."/>
            <person name="Dossat C."/>
            <person name="Karoui M.E."/>
            <person name="Frapy E."/>
            <person name="Garry L."/>
            <person name="Ghigo J.M."/>
            <person name="Gilles A.M."/>
            <person name="Johnson J."/>
            <person name="Le Bouguenec C."/>
            <person name="Lescat M."/>
            <person name="Mangenot S."/>
            <person name="Martinez-Jehanne V."/>
            <person name="Matic I."/>
            <person name="Nassif X."/>
            <person name="Oztas S."/>
            <person name="Petit M.A."/>
            <person name="Pichon C."/>
            <person name="Rouy Z."/>
            <person name="Ruf C.S."/>
            <person name="Schneider D."/>
            <person name="Tourret J."/>
            <person name="Vacherie B."/>
            <person name="Vallenet D."/>
            <person name="Medigue C."/>
            <person name="Rocha E.P.C."/>
            <person name="Denamur E."/>
        </authorList>
    </citation>
    <scope>NUCLEOTIDE SEQUENCE [LARGE SCALE GENOMIC DNA]</scope>
    <source>
        <strain>UMN026 / ExPEC</strain>
    </source>
</reference>
<accession>B7NBP2</accession>
<comment type="function">
    <text evidence="1">Functions in complex with FlhC as a master transcriptional regulator that regulates transcription of several flagellar and non-flagellar operons by binding to their promoter region. Activates expression of class 2 flagellar genes, including fliA, which is a flagellum-specific sigma factor that turns on the class 3 genes. Also regulates genes whose products function in a variety of physiological pathways.</text>
</comment>
<comment type="subunit">
    <text evidence="1">Homodimer; disulfide-linked. Forms a heterohexamer composed of two FlhC and four FlhD subunits. Each FlhC binds a FlhD dimer, forming a heterotrimer, and a hexamer assembles by dimerization of two heterotrimers.</text>
</comment>
<comment type="subcellular location">
    <subcellularLocation>
        <location evidence="1">Cytoplasm</location>
    </subcellularLocation>
</comment>
<comment type="domain">
    <text evidence="1">The C-terminal region contains a putative helix-turn-helix (HTH) motif, suggesting that this region may bind DNA.</text>
</comment>
<comment type="similarity">
    <text evidence="1">Belongs to the FlhD family.</text>
</comment>
<organism>
    <name type="scientific">Escherichia coli O17:K52:H18 (strain UMN026 / ExPEC)</name>
    <dbReference type="NCBI Taxonomy" id="585056"/>
    <lineage>
        <taxon>Bacteria</taxon>
        <taxon>Pseudomonadati</taxon>
        <taxon>Pseudomonadota</taxon>
        <taxon>Gammaproteobacteria</taxon>
        <taxon>Enterobacterales</taxon>
        <taxon>Enterobacteriaceae</taxon>
        <taxon>Escherichia</taxon>
    </lineage>
</organism>